<feature type="chain" id="PRO_0000353327" description="DNA-directed RNA polymerase subunit beta'">
    <location>
        <begin position="1"/>
        <end position="1178"/>
    </location>
</feature>
<feature type="binding site" evidence="1">
    <location>
        <position position="60"/>
    </location>
    <ligand>
        <name>Zn(2+)</name>
        <dbReference type="ChEBI" id="CHEBI:29105"/>
        <label>1</label>
    </ligand>
</feature>
<feature type="binding site" evidence="1">
    <location>
        <position position="62"/>
    </location>
    <ligand>
        <name>Zn(2+)</name>
        <dbReference type="ChEBI" id="CHEBI:29105"/>
        <label>1</label>
    </ligand>
</feature>
<feature type="binding site" evidence="1">
    <location>
        <position position="75"/>
    </location>
    <ligand>
        <name>Zn(2+)</name>
        <dbReference type="ChEBI" id="CHEBI:29105"/>
        <label>1</label>
    </ligand>
</feature>
<feature type="binding site" evidence="1">
    <location>
        <position position="78"/>
    </location>
    <ligand>
        <name>Zn(2+)</name>
        <dbReference type="ChEBI" id="CHEBI:29105"/>
        <label>1</label>
    </ligand>
</feature>
<feature type="binding site" evidence="1">
    <location>
        <position position="450"/>
    </location>
    <ligand>
        <name>Mg(2+)</name>
        <dbReference type="ChEBI" id="CHEBI:18420"/>
    </ligand>
</feature>
<feature type="binding site" evidence="1">
    <location>
        <position position="452"/>
    </location>
    <ligand>
        <name>Mg(2+)</name>
        <dbReference type="ChEBI" id="CHEBI:18420"/>
    </ligand>
</feature>
<feature type="binding site" evidence="1">
    <location>
        <position position="454"/>
    </location>
    <ligand>
        <name>Mg(2+)</name>
        <dbReference type="ChEBI" id="CHEBI:18420"/>
    </ligand>
</feature>
<feature type="binding site" evidence="1">
    <location>
        <position position="795"/>
    </location>
    <ligand>
        <name>Zn(2+)</name>
        <dbReference type="ChEBI" id="CHEBI:29105"/>
        <label>2</label>
    </ligand>
</feature>
<feature type="binding site" evidence="1">
    <location>
        <position position="869"/>
    </location>
    <ligand>
        <name>Zn(2+)</name>
        <dbReference type="ChEBI" id="CHEBI:29105"/>
        <label>2</label>
    </ligand>
</feature>
<feature type="binding site" evidence="1">
    <location>
        <position position="876"/>
    </location>
    <ligand>
        <name>Zn(2+)</name>
        <dbReference type="ChEBI" id="CHEBI:29105"/>
        <label>2</label>
    </ligand>
</feature>
<feature type="binding site" evidence="1">
    <location>
        <position position="879"/>
    </location>
    <ligand>
        <name>Zn(2+)</name>
        <dbReference type="ChEBI" id="CHEBI:29105"/>
        <label>2</label>
    </ligand>
</feature>
<gene>
    <name evidence="1" type="primary">rpoC</name>
    <name type="ordered locus">Cbei_0145</name>
</gene>
<evidence type="ECO:0000255" key="1">
    <source>
        <dbReference type="HAMAP-Rule" id="MF_01322"/>
    </source>
</evidence>
<accession>A6LPQ5</accession>
<protein>
    <recommendedName>
        <fullName evidence="1">DNA-directed RNA polymerase subunit beta'</fullName>
        <shortName evidence="1">RNAP subunit beta'</shortName>
        <ecNumber evidence="1">2.7.7.6</ecNumber>
    </recommendedName>
    <alternativeName>
        <fullName evidence="1">RNA polymerase subunit beta'</fullName>
    </alternativeName>
    <alternativeName>
        <fullName evidence="1">Transcriptase subunit beta'</fullName>
    </alternativeName>
</protein>
<name>RPOC_CLOB8</name>
<reference key="1">
    <citation type="submission" date="2007-06" db="EMBL/GenBank/DDBJ databases">
        <title>Complete sequence of Clostridium beijerinckii NCIMB 8052.</title>
        <authorList>
            <consortium name="US DOE Joint Genome Institute"/>
            <person name="Copeland A."/>
            <person name="Lucas S."/>
            <person name="Lapidus A."/>
            <person name="Barry K."/>
            <person name="Detter J.C."/>
            <person name="Glavina del Rio T."/>
            <person name="Hammon N."/>
            <person name="Israni S."/>
            <person name="Dalin E."/>
            <person name="Tice H."/>
            <person name="Pitluck S."/>
            <person name="Sims D."/>
            <person name="Brettin T."/>
            <person name="Bruce D."/>
            <person name="Tapia R."/>
            <person name="Brainard J."/>
            <person name="Schmutz J."/>
            <person name="Larimer F."/>
            <person name="Land M."/>
            <person name="Hauser L."/>
            <person name="Kyrpides N."/>
            <person name="Mikhailova N."/>
            <person name="Bennet G."/>
            <person name="Cann I."/>
            <person name="Chen J.-S."/>
            <person name="Contreras A.L."/>
            <person name="Jones D."/>
            <person name="Kashket E."/>
            <person name="Mitchell W."/>
            <person name="Stoddard S."/>
            <person name="Schwarz W."/>
            <person name="Qureshi N."/>
            <person name="Young M."/>
            <person name="Shi Z."/>
            <person name="Ezeji T."/>
            <person name="White B."/>
            <person name="Blaschek H."/>
            <person name="Richardson P."/>
        </authorList>
    </citation>
    <scope>NUCLEOTIDE SEQUENCE [LARGE SCALE GENOMIC DNA]</scope>
    <source>
        <strain>ATCC 51743 / NCIMB 8052</strain>
    </source>
</reference>
<comment type="function">
    <text evidence="1">DNA-dependent RNA polymerase catalyzes the transcription of DNA into RNA using the four ribonucleoside triphosphates as substrates.</text>
</comment>
<comment type="catalytic activity">
    <reaction evidence="1">
        <text>RNA(n) + a ribonucleoside 5'-triphosphate = RNA(n+1) + diphosphate</text>
        <dbReference type="Rhea" id="RHEA:21248"/>
        <dbReference type="Rhea" id="RHEA-COMP:14527"/>
        <dbReference type="Rhea" id="RHEA-COMP:17342"/>
        <dbReference type="ChEBI" id="CHEBI:33019"/>
        <dbReference type="ChEBI" id="CHEBI:61557"/>
        <dbReference type="ChEBI" id="CHEBI:140395"/>
        <dbReference type="EC" id="2.7.7.6"/>
    </reaction>
</comment>
<comment type="cofactor">
    <cofactor evidence="1">
        <name>Mg(2+)</name>
        <dbReference type="ChEBI" id="CHEBI:18420"/>
    </cofactor>
    <text evidence="1">Binds 1 Mg(2+) ion per subunit.</text>
</comment>
<comment type="cofactor">
    <cofactor evidence="1">
        <name>Zn(2+)</name>
        <dbReference type="ChEBI" id="CHEBI:29105"/>
    </cofactor>
    <text evidence="1">Binds 2 Zn(2+) ions per subunit.</text>
</comment>
<comment type="subunit">
    <text evidence="1">The RNAP catalytic core consists of 2 alpha, 1 beta, 1 beta' and 1 omega subunit. When a sigma factor is associated with the core the holoenzyme is formed, which can initiate transcription.</text>
</comment>
<comment type="similarity">
    <text evidence="1">Belongs to the RNA polymerase beta' chain family.</text>
</comment>
<dbReference type="EC" id="2.7.7.6" evidence="1"/>
<dbReference type="EMBL" id="CP000721">
    <property type="protein sequence ID" value="ABR32335.1"/>
    <property type="molecule type" value="Genomic_DNA"/>
</dbReference>
<dbReference type="RefSeq" id="WP_011967507.1">
    <property type="nucleotide sequence ID" value="NC_009617.1"/>
</dbReference>
<dbReference type="SMR" id="A6LPQ5"/>
<dbReference type="KEGG" id="cbe:Cbei_0145"/>
<dbReference type="eggNOG" id="COG0086">
    <property type="taxonomic scope" value="Bacteria"/>
</dbReference>
<dbReference type="HOGENOM" id="CLU_000524_3_1_9"/>
<dbReference type="Proteomes" id="UP000000565">
    <property type="component" value="Chromosome"/>
</dbReference>
<dbReference type="GO" id="GO:0000428">
    <property type="term" value="C:DNA-directed RNA polymerase complex"/>
    <property type="evidence" value="ECO:0007669"/>
    <property type="project" value="UniProtKB-KW"/>
</dbReference>
<dbReference type="GO" id="GO:0003677">
    <property type="term" value="F:DNA binding"/>
    <property type="evidence" value="ECO:0007669"/>
    <property type="project" value="UniProtKB-UniRule"/>
</dbReference>
<dbReference type="GO" id="GO:0003899">
    <property type="term" value="F:DNA-directed RNA polymerase activity"/>
    <property type="evidence" value="ECO:0007669"/>
    <property type="project" value="UniProtKB-UniRule"/>
</dbReference>
<dbReference type="GO" id="GO:0000287">
    <property type="term" value="F:magnesium ion binding"/>
    <property type="evidence" value="ECO:0007669"/>
    <property type="project" value="UniProtKB-UniRule"/>
</dbReference>
<dbReference type="GO" id="GO:0008270">
    <property type="term" value="F:zinc ion binding"/>
    <property type="evidence" value="ECO:0007669"/>
    <property type="project" value="UniProtKB-UniRule"/>
</dbReference>
<dbReference type="GO" id="GO:0006351">
    <property type="term" value="P:DNA-templated transcription"/>
    <property type="evidence" value="ECO:0007669"/>
    <property type="project" value="UniProtKB-UniRule"/>
</dbReference>
<dbReference type="CDD" id="cd02655">
    <property type="entry name" value="RNAP_beta'_C"/>
    <property type="match status" value="1"/>
</dbReference>
<dbReference type="CDD" id="cd01609">
    <property type="entry name" value="RNAP_beta'_N"/>
    <property type="match status" value="1"/>
</dbReference>
<dbReference type="FunFam" id="1.10.150.390:FF:000002">
    <property type="entry name" value="DNA-directed RNA polymerase subunit beta"/>
    <property type="match status" value="1"/>
</dbReference>
<dbReference type="FunFam" id="4.10.860.120:FF:000001">
    <property type="entry name" value="DNA-directed RNA polymerase subunit beta"/>
    <property type="match status" value="1"/>
</dbReference>
<dbReference type="Gene3D" id="1.10.132.30">
    <property type="match status" value="1"/>
</dbReference>
<dbReference type="Gene3D" id="1.10.150.390">
    <property type="match status" value="1"/>
</dbReference>
<dbReference type="Gene3D" id="1.10.1790.20">
    <property type="match status" value="1"/>
</dbReference>
<dbReference type="Gene3D" id="1.10.40.90">
    <property type="match status" value="1"/>
</dbReference>
<dbReference type="Gene3D" id="2.40.40.20">
    <property type="match status" value="1"/>
</dbReference>
<dbReference type="Gene3D" id="2.40.50.100">
    <property type="match status" value="1"/>
</dbReference>
<dbReference type="Gene3D" id="4.10.860.120">
    <property type="entry name" value="RNA polymerase II, clamp domain"/>
    <property type="match status" value="1"/>
</dbReference>
<dbReference type="Gene3D" id="1.10.274.100">
    <property type="entry name" value="RNA polymerase Rpb1, domain 3"/>
    <property type="match status" value="2"/>
</dbReference>
<dbReference type="HAMAP" id="MF_01322">
    <property type="entry name" value="RNApol_bact_RpoC"/>
    <property type="match status" value="1"/>
</dbReference>
<dbReference type="InterPro" id="IPR045867">
    <property type="entry name" value="DNA-dir_RpoC_beta_prime"/>
</dbReference>
<dbReference type="InterPro" id="IPR012754">
    <property type="entry name" value="DNA-dir_RpoC_beta_prime_bact"/>
</dbReference>
<dbReference type="InterPro" id="IPR000722">
    <property type="entry name" value="RNA_pol_asu"/>
</dbReference>
<dbReference type="InterPro" id="IPR006592">
    <property type="entry name" value="RNA_pol_N"/>
</dbReference>
<dbReference type="InterPro" id="IPR007080">
    <property type="entry name" value="RNA_pol_Rpb1_1"/>
</dbReference>
<dbReference type="InterPro" id="IPR007066">
    <property type="entry name" value="RNA_pol_Rpb1_3"/>
</dbReference>
<dbReference type="InterPro" id="IPR042102">
    <property type="entry name" value="RNA_pol_Rpb1_3_sf"/>
</dbReference>
<dbReference type="InterPro" id="IPR007083">
    <property type="entry name" value="RNA_pol_Rpb1_4"/>
</dbReference>
<dbReference type="InterPro" id="IPR007081">
    <property type="entry name" value="RNA_pol_Rpb1_5"/>
</dbReference>
<dbReference type="InterPro" id="IPR044893">
    <property type="entry name" value="RNA_pol_Rpb1_clamp_domain"/>
</dbReference>
<dbReference type="InterPro" id="IPR038120">
    <property type="entry name" value="Rpb1_funnel_sf"/>
</dbReference>
<dbReference type="NCBIfam" id="TIGR02386">
    <property type="entry name" value="rpoC_TIGR"/>
    <property type="match status" value="1"/>
</dbReference>
<dbReference type="PANTHER" id="PTHR19376">
    <property type="entry name" value="DNA-DIRECTED RNA POLYMERASE"/>
    <property type="match status" value="1"/>
</dbReference>
<dbReference type="PANTHER" id="PTHR19376:SF54">
    <property type="entry name" value="DNA-DIRECTED RNA POLYMERASE SUBUNIT BETA"/>
    <property type="match status" value="1"/>
</dbReference>
<dbReference type="Pfam" id="PF04997">
    <property type="entry name" value="RNA_pol_Rpb1_1"/>
    <property type="match status" value="1"/>
</dbReference>
<dbReference type="Pfam" id="PF00623">
    <property type="entry name" value="RNA_pol_Rpb1_2"/>
    <property type="match status" value="2"/>
</dbReference>
<dbReference type="Pfam" id="PF04983">
    <property type="entry name" value="RNA_pol_Rpb1_3"/>
    <property type="match status" value="1"/>
</dbReference>
<dbReference type="Pfam" id="PF05000">
    <property type="entry name" value="RNA_pol_Rpb1_4"/>
    <property type="match status" value="1"/>
</dbReference>
<dbReference type="Pfam" id="PF04998">
    <property type="entry name" value="RNA_pol_Rpb1_5"/>
    <property type="match status" value="1"/>
</dbReference>
<dbReference type="SMART" id="SM00663">
    <property type="entry name" value="RPOLA_N"/>
    <property type="match status" value="1"/>
</dbReference>
<dbReference type="SUPFAM" id="SSF64484">
    <property type="entry name" value="beta and beta-prime subunits of DNA dependent RNA-polymerase"/>
    <property type="match status" value="1"/>
</dbReference>
<sequence length="1178" mass="131775">MFELNNFDAIQIGLASPEQIRQWSRGEVKKPETINYRTLKPERDGLFCERIFGPMKDWECHCGKYKRVRYKGIVCDRCGVEVTKAKVRRERMGHIELAAPVSHIWYFKGIPSRMGLILDMSPRALEKVLYFASYIVIDPKETPLLKKQLLNEKEYREAVDKYGDESFVAGMGAEAIQDLLNEIDLVTSSKELKEELKQSSGQKKVRIIRRLEVVESFRKSGNDPQWMVINVIPVIPPDLRPMVQLDGGRFATSDLNDLYRRVINRNNRLKKLLDLGAPDIIVRNEKRMLQEAVDALIDNGRRGRPVTGPGNRPLKSLSDMLKGKQGRFRQNLLGKRVDYSGRSVIVVGPELKMYQCGLPKEMAIELFKPFVMKKLVQDGIAHNIKSAKRMVERVLPQVWDVLEEVIADHPVLLNRAPTLHRLGIQAFQPVLVEGRAIKLHPLACTAYNADFDGDQMAVHLPLSVEAQAEARFLMLAATNILKPSDGKPVCVPTQDMILGSYYLTMDKNGAKGDGMTFSSKDEAIMAYEVKEIDIHAQINVRMFREVDGELKSKIIKTTVGKIIFNESIPQNLGLVNRENEEESFNLEVDFLATKKSLGKIIDQCYMKHGPVKTSIMLDNIKALGYHYSSIGAVTVASSDIIVPKVKYDLLKEADETIEKIEKMYKRGFISDEERYERVIEKWTQTTEDVANALMDSLDKFNPIYMMADSGARGSKSQIKQLAGMRGLMASPSGKIIELPIRASFKEGLDVIEYFLSTHGARKGNADTALKTADSGYLTRRLVDVSQDVIVREEDCGTDEGIFVSEIKEGNEVIEELRERLIGRYTAEDIVDPETGDVLHPKNEYMDPYAADKIVSAGIKKVKIRSVFTCKCKVGVCARCYGMNMATAKKIDIGEAVGIIAAQSIGEPGTQLTMRTFHTGGVAGADITQGLPRVEELFEARKPKGLAIVSEIAGTARIEETKKKRTVIVMGADGEERSYDIPFGSRLRVNESDYVEAGDEITEGSVNPHDIMSIKGIDGARRYLLSEVQKVYRLQGVDINDKHLEVVVRQMTRKIKIVDSGDTDLLPGTMIDMFDFYEENARVREFGGEEAKGEQTLLGITKAALATDSFLSAASFQETTRVLTEAAIKGKVDPLVGLKENVIIGKLIPAGTGMMRYRSLKVETDSELVEETIGETVEE</sequence>
<proteinExistence type="inferred from homology"/>
<organism>
    <name type="scientific">Clostridium beijerinckii (strain ATCC 51743 / NCIMB 8052)</name>
    <name type="common">Clostridium acetobutylicum</name>
    <dbReference type="NCBI Taxonomy" id="290402"/>
    <lineage>
        <taxon>Bacteria</taxon>
        <taxon>Bacillati</taxon>
        <taxon>Bacillota</taxon>
        <taxon>Clostridia</taxon>
        <taxon>Eubacteriales</taxon>
        <taxon>Clostridiaceae</taxon>
        <taxon>Clostridium</taxon>
    </lineage>
</organism>
<keyword id="KW-0240">DNA-directed RNA polymerase</keyword>
<keyword id="KW-0460">Magnesium</keyword>
<keyword id="KW-0479">Metal-binding</keyword>
<keyword id="KW-0548">Nucleotidyltransferase</keyword>
<keyword id="KW-0804">Transcription</keyword>
<keyword id="KW-0808">Transferase</keyword>
<keyword id="KW-0862">Zinc</keyword>